<gene>
    <name type="primary">NAT3</name>
    <name type="ordered locus">At2g26510</name>
    <name type="ORF">T9J22.18</name>
</gene>
<proteinExistence type="evidence at transcript level"/>
<name>NAT3_ARATH</name>
<reference key="1">
    <citation type="journal article" date="2002" name="Hangug Nonghwahag Hoeji">
        <title>Sequence analysis of a putative membrane transporter cDNA of Arabidopsis thaliana.</title>
        <authorList>
            <person name="Park S."/>
            <person name="Thornburg R.W."/>
        </authorList>
    </citation>
    <scope>NUCLEOTIDE SEQUENCE [MRNA]</scope>
</reference>
<reference key="2">
    <citation type="journal article" date="1999" name="Nature">
        <title>Sequence and analysis of chromosome 2 of the plant Arabidopsis thaliana.</title>
        <authorList>
            <person name="Lin X."/>
            <person name="Kaul S."/>
            <person name="Rounsley S.D."/>
            <person name="Shea T.P."/>
            <person name="Benito M.-I."/>
            <person name="Town C.D."/>
            <person name="Fujii C.Y."/>
            <person name="Mason T.M."/>
            <person name="Bowman C.L."/>
            <person name="Barnstead M.E."/>
            <person name="Feldblyum T.V."/>
            <person name="Buell C.R."/>
            <person name="Ketchum K.A."/>
            <person name="Lee J.J."/>
            <person name="Ronning C.M."/>
            <person name="Koo H.L."/>
            <person name="Moffat K.S."/>
            <person name="Cronin L.A."/>
            <person name="Shen M."/>
            <person name="Pai G."/>
            <person name="Van Aken S."/>
            <person name="Umayam L."/>
            <person name="Tallon L.J."/>
            <person name="Gill J.E."/>
            <person name="Adams M.D."/>
            <person name="Carrera A.J."/>
            <person name="Creasy T.H."/>
            <person name="Goodman H.M."/>
            <person name="Somerville C.R."/>
            <person name="Copenhaver G.P."/>
            <person name="Preuss D."/>
            <person name="Nierman W.C."/>
            <person name="White O."/>
            <person name="Eisen J.A."/>
            <person name="Salzberg S.L."/>
            <person name="Fraser C.M."/>
            <person name="Venter J.C."/>
        </authorList>
    </citation>
    <scope>NUCLEOTIDE SEQUENCE [LARGE SCALE GENOMIC DNA]</scope>
    <source>
        <strain>cv. Columbia</strain>
    </source>
</reference>
<reference key="3">
    <citation type="journal article" date="2017" name="Plant J.">
        <title>Araport11: a complete reannotation of the Arabidopsis thaliana reference genome.</title>
        <authorList>
            <person name="Cheng C.Y."/>
            <person name="Krishnakumar V."/>
            <person name="Chan A.P."/>
            <person name="Thibaud-Nissen F."/>
            <person name="Schobel S."/>
            <person name="Town C.D."/>
        </authorList>
    </citation>
    <scope>GENOME REANNOTATION</scope>
    <source>
        <strain>cv. Columbia</strain>
    </source>
</reference>
<reference key="4">
    <citation type="journal article" date="2003" name="Science">
        <title>Empirical analysis of transcriptional activity in the Arabidopsis genome.</title>
        <authorList>
            <person name="Yamada K."/>
            <person name="Lim J."/>
            <person name="Dale J.M."/>
            <person name="Chen H."/>
            <person name="Shinn P."/>
            <person name="Palm C.J."/>
            <person name="Southwick A.M."/>
            <person name="Wu H.C."/>
            <person name="Kim C.J."/>
            <person name="Nguyen M."/>
            <person name="Pham P.K."/>
            <person name="Cheuk R.F."/>
            <person name="Karlin-Newmann G."/>
            <person name="Liu S.X."/>
            <person name="Lam B."/>
            <person name="Sakano H."/>
            <person name="Wu T."/>
            <person name="Yu G."/>
            <person name="Miranda M."/>
            <person name="Quach H.L."/>
            <person name="Tripp M."/>
            <person name="Chang C.H."/>
            <person name="Lee J.M."/>
            <person name="Toriumi M.J."/>
            <person name="Chan M.M."/>
            <person name="Tang C.C."/>
            <person name="Onodera C.S."/>
            <person name="Deng J.M."/>
            <person name="Akiyama K."/>
            <person name="Ansari Y."/>
            <person name="Arakawa T."/>
            <person name="Banh J."/>
            <person name="Banno F."/>
            <person name="Bowser L."/>
            <person name="Brooks S.Y."/>
            <person name="Carninci P."/>
            <person name="Chao Q."/>
            <person name="Choy N."/>
            <person name="Enju A."/>
            <person name="Goldsmith A.D."/>
            <person name="Gurjal M."/>
            <person name="Hansen N.F."/>
            <person name="Hayashizaki Y."/>
            <person name="Johnson-Hopson C."/>
            <person name="Hsuan V.W."/>
            <person name="Iida K."/>
            <person name="Karnes M."/>
            <person name="Khan S."/>
            <person name="Koesema E."/>
            <person name="Ishida J."/>
            <person name="Jiang P.X."/>
            <person name="Jones T."/>
            <person name="Kawai J."/>
            <person name="Kamiya A."/>
            <person name="Meyers C."/>
            <person name="Nakajima M."/>
            <person name="Narusaka M."/>
            <person name="Seki M."/>
            <person name="Sakurai T."/>
            <person name="Satou M."/>
            <person name="Tamse R."/>
            <person name="Vaysberg M."/>
            <person name="Wallender E.K."/>
            <person name="Wong C."/>
            <person name="Yamamura Y."/>
            <person name="Yuan S."/>
            <person name="Shinozaki K."/>
            <person name="Davis R.W."/>
            <person name="Theologis A."/>
            <person name="Ecker J.R."/>
        </authorList>
    </citation>
    <scope>NUCLEOTIDE SEQUENCE [LARGE SCALE MRNA]</scope>
    <source>
        <strain>cv. Columbia</strain>
    </source>
</reference>
<reference key="5">
    <citation type="journal article" date="2006" name="Plant Cell Physiol.">
        <title>Identification and expression analysis of twelve members of the nucleobase-ascorbate transporter (NAT) gene family in Arabidopsis thaliana.</title>
        <authorList>
            <person name="Maurino V.G."/>
            <person name="Grube E."/>
            <person name="Zielinski J."/>
            <person name="Schild A."/>
            <person name="Fischer K."/>
            <person name="Flugge U.-I."/>
        </authorList>
    </citation>
    <scope>GENE FAMILY</scope>
    <scope>TISSUE SPECIFICITY</scope>
    <scope>DEVELOPMENTAL STAGE</scope>
</reference>
<evidence type="ECO:0000255" key="1"/>
<evidence type="ECO:0000256" key="2">
    <source>
        <dbReference type="SAM" id="MobiDB-lite"/>
    </source>
</evidence>
<evidence type="ECO:0000269" key="3">
    <source>
    </source>
</evidence>
<evidence type="ECO:0000305" key="4"/>
<dbReference type="EMBL" id="AF515778">
    <property type="protein sequence ID" value="AAO13361.1"/>
    <property type="molecule type" value="mRNA"/>
</dbReference>
<dbReference type="EMBL" id="AC002505">
    <property type="protein sequence ID" value="AAC14499.1"/>
    <property type="molecule type" value="Genomic_DNA"/>
</dbReference>
<dbReference type="EMBL" id="CP002685">
    <property type="protein sequence ID" value="AEC07848.1"/>
    <property type="molecule type" value="Genomic_DNA"/>
</dbReference>
<dbReference type="EMBL" id="AF370518">
    <property type="protein sequence ID" value="AAK43895.1"/>
    <property type="molecule type" value="mRNA"/>
</dbReference>
<dbReference type="EMBL" id="BT008902">
    <property type="protein sequence ID" value="AAP68341.1"/>
    <property type="molecule type" value="mRNA"/>
</dbReference>
<dbReference type="PIR" id="T00984">
    <property type="entry name" value="T00984"/>
</dbReference>
<dbReference type="RefSeq" id="NP_180219.1">
    <molecule id="Q8GZD4-1"/>
    <property type="nucleotide sequence ID" value="NM_128208.5"/>
</dbReference>
<dbReference type="SMR" id="Q8GZD4"/>
<dbReference type="BioGRID" id="2544">
    <property type="interactions" value="2"/>
</dbReference>
<dbReference type="FunCoup" id="Q8GZD4">
    <property type="interactions" value="1408"/>
</dbReference>
<dbReference type="STRING" id="3702.Q8GZD4"/>
<dbReference type="iPTMnet" id="Q8GZD4"/>
<dbReference type="PaxDb" id="3702-AT2G26510.1"/>
<dbReference type="ProteomicsDB" id="251048">
    <molecule id="Q8GZD4-1"/>
</dbReference>
<dbReference type="EnsemblPlants" id="AT2G26510.1">
    <molecule id="Q8GZD4-1"/>
    <property type="protein sequence ID" value="AT2G26510.1"/>
    <property type="gene ID" value="AT2G26510"/>
</dbReference>
<dbReference type="GeneID" id="817192"/>
<dbReference type="Gramene" id="AT2G26510.1">
    <molecule id="Q8GZD4-1"/>
    <property type="protein sequence ID" value="AT2G26510.1"/>
    <property type="gene ID" value="AT2G26510"/>
</dbReference>
<dbReference type="KEGG" id="ath:AT2G26510"/>
<dbReference type="Araport" id="AT2G26510"/>
<dbReference type="TAIR" id="AT2G26510">
    <property type="gene designation" value="PDE135"/>
</dbReference>
<dbReference type="eggNOG" id="KOG1292">
    <property type="taxonomic scope" value="Eukaryota"/>
</dbReference>
<dbReference type="HOGENOM" id="CLU_017959_5_3_1"/>
<dbReference type="InParanoid" id="Q8GZD4"/>
<dbReference type="OMA" id="MVVSMTE"/>
<dbReference type="PhylomeDB" id="Q8GZD4"/>
<dbReference type="PRO" id="PR:Q8GZD4"/>
<dbReference type="Proteomes" id="UP000006548">
    <property type="component" value="Chromosome 2"/>
</dbReference>
<dbReference type="ExpressionAtlas" id="Q8GZD4">
    <property type="expression patterns" value="baseline and differential"/>
</dbReference>
<dbReference type="GO" id="GO:0005886">
    <property type="term" value="C:plasma membrane"/>
    <property type="evidence" value="ECO:0000314"/>
    <property type="project" value="TAIR"/>
</dbReference>
<dbReference type="GO" id="GO:0009506">
    <property type="term" value="C:plasmodesma"/>
    <property type="evidence" value="ECO:0007005"/>
    <property type="project" value="TAIR"/>
</dbReference>
<dbReference type="GO" id="GO:0015207">
    <property type="term" value="F:adenine transmembrane transporter activity"/>
    <property type="evidence" value="ECO:0000314"/>
    <property type="project" value="TAIR"/>
</dbReference>
<dbReference type="GO" id="GO:0015208">
    <property type="term" value="F:guanine transmembrane transporter activity"/>
    <property type="evidence" value="ECO:0000314"/>
    <property type="project" value="TAIR"/>
</dbReference>
<dbReference type="GO" id="GO:0015294">
    <property type="term" value="F:solute:monoatomic cation symporter activity"/>
    <property type="evidence" value="ECO:0000314"/>
    <property type="project" value="TAIR"/>
</dbReference>
<dbReference type="GO" id="GO:0015210">
    <property type="term" value="F:uracil transmembrane transporter activity"/>
    <property type="evidence" value="ECO:0000314"/>
    <property type="project" value="TAIR"/>
</dbReference>
<dbReference type="GO" id="GO:0098702">
    <property type="term" value="P:adenine import across plasma membrane"/>
    <property type="evidence" value="ECO:0000314"/>
    <property type="project" value="TAIR"/>
</dbReference>
<dbReference type="GO" id="GO:0098710">
    <property type="term" value="P:guanine import across plasma membrane"/>
    <property type="evidence" value="ECO:0000314"/>
    <property type="project" value="TAIR"/>
</dbReference>
<dbReference type="GO" id="GO:0035344">
    <property type="term" value="P:hypoxanthine transport"/>
    <property type="evidence" value="ECO:0000314"/>
    <property type="project" value="TAIR"/>
</dbReference>
<dbReference type="GO" id="GO:0098721">
    <property type="term" value="P:uracil import across plasma membrane"/>
    <property type="evidence" value="ECO:0000314"/>
    <property type="project" value="TAIR"/>
</dbReference>
<dbReference type="InterPro" id="IPR006043">
    <property type="entry name" value="NCS2"/>
</dbReference>
<dbReference type="NCBIfam" id="NF037981">
    <property type="entry name" value="NCS2_1"/>
    <property type="match status" value="1"/>
</dbReference>
<dbReference type="PANTHER" id="PTHR11119">
    <property type="entry name" value="XANTHINE-URACIL / VITAMIN C PERMEASE FAMILY MEMBER"/>
    <property type="match status" value="1"/>
</dbReference>
<dbReference type="Pfam" id="PF00860">
    <property type="entry name" value="Xan_ur_permease"/>
    <property type="match status" value="1"/>
</dbReference>
<organism>
    <name type="scientific">Arabidopsis thaliana</name>
    <name type="common">Mouse-ear cress</name>
    <dbReference type="NCBI Taxonomy" id="3702"/>
    <lineage>
        <taxon>Eukaryota</taxon>
        <taxon>Viridiplantae</taxon>
        <taxon>Streptophyta</taxon>
        <taxon>Embryophyta</taxon>
        <taxon>Tracheophyta</taxon>
        <taxon>Spermatophyta</taxon>
        <taxon>Magnoliopsida</taxon>
        <taxon>eudicotyledons</taxon>
        <taxon>Gunneridae</taxon>
        <taxon>Pentapetalae</taxon>
        <taxon>rosids</taxon>
        <taxon>malvids</taxon>
        <taxon>Brassicales</taxon>
        <taxon>Brassicaceae</taxon>
        <taxon>Camelineae</taxon>
        <taxon>Arabidopsis</taxon>
    </lineage>
</organism>
<keyword id="KW-0025">Alternative splicing</keyword>
<keyword id="KW-0472">Membrane</keyword>
<keyword id="KW-1185">Reference proteome</keyword>
<keyword id="KW-0812">Transmembrane</keyword>
<keyword id="KW-1133">Transmembrane helix</keyword>
<keyword id="KW-0813">Transport</keyword>
<comment type="subcellular location">
    <subcellularLocation>
        <location evidence="4">Membrane</location>
        <topology evidence="4">Multi-pass membrane protein</topology>
    </subcellularLocation>
</comment>
<comment type="alternative products">
    <event type="alternative splicing"/>
    <isoform>
        <id>Q8GZD4-1</id>
        <name>1</name>
        <sequence type="displayed"/>
    </isoform>
    <text>A number of isoforms are produced. According to EST sequences.</text>
</comment>
<comment type="tissue specificity">
    <text evidence="3">Expressed in the apical meristem 4 days after imbibition (DAI). Expressed in the major veins of rosette leaves and pedicels. Expressed in the root central cylinder, root meristems, root tips and lateral root primordia.</text>
</comment>
<comment type="developmental stage">
    <text evidence="3">Expressed in gynoecium development, disappearing after pollination.</text>
</comment>
<comment type="similarity">
    <text evidence="4">Belongs to the nucleobase:cation symporter-2 (NCS2) (TC 2.A.40) family.</text>
</comment>
<accession>Q8GZD4</accession>
<accession>O48718</accession>
<sequence>MVETGHHHQHPPAPAAAGHPPVPSMAMARNMGTTWPPAEQLHHLQYCIHSNPSWHETVVLAFQHYIVMLGTTVLIANTLVSPMGGDPGDKARVIQTILFMSGINTLLQTLIGTRLPTVMGVSFAYVLPVLSIIRDYNNGQFDSEKQRFRHTMRTVQGSLIISSFVNIIIGYGQAWGNLIRIFSPIIVVPVVSVVSLGLFLRGFPLLANCVEIGLPMLILLIITQQYLKHAFSRISMILERYALLVCLAIIWAFAAILTVSGAYNNVSTATKQSCRTDRAFLMSSAPWIRIPYPFQWGTPIFKASHVFGMFGAAIVASAESTGVFFAASRLAGATAPPAHVVSRSIGLQGIGVLLEGIFGSITGNTASVENVGLLGLTRIGSRRVVQVSTFFMIFFSIFGKFGAFFASIPLPIFAGVYCILLGIVVAVGISFIQFTDTNSMRNMYVIGVSLFLSLSIAQYFLANTSRAGYGPVRTAGGWFNDILNTIFASAPLVATILATILDNTLEARHASDDARGIPWWKPFQHRNGDGRNDEFYSMPLRINELMPTRFL</sequence>
<protein>
    <recommendedName>
        <fullName>Nucleobase-ascorbate transporter 3</fullName>
        <shortName>AtNAT3</shortName>
    </recommendedName>
</protein>
<feature type="chain" id="PRO_0000270160" description="Nucleobase-ascorbate transporter 3">
    <location>
        <begin position="1"/>
        <end position="551"/>
    </location>
</feature>
<feature type="transmembrane region" description="Helical" evidence="1">
    <location>
        <begin position="56"/>
        <end position="76"/>
    </location>
</feature>
<feature type="transmembrane region" description="Helical" evidence="1">
    <location>
        <begin position="92"/>
        <end position="111"/>
    </location>
</feature>
<feature type="transmembrane region" description="Helical" evidence="1">
    <location>
        <begin position="117"/>
        <end position="136"/>
    </location>
</feature>
<feature type="transmembrane region" description="Helical" evidence="1">
    <location>
        <begin position="158"/>
        <end position="178"/>
    </location>
</feature>
<feature type="transmembrane region" description="Helical" evidence="1">
    <location>
        <begin position="179"/>
        <end position="199"/>
    </location>
</feature>
<feature type="transmembrane region" description="Helical" evidence="1">
    <location>
        <begin position="202"/>
        <end position="222"/>
    </location>
</feature>
<feature type="transmembrane region" description="Helical" evidence="1">
    <location>
        <begin position="242"/>
        <end position="262"/>
    </location>
</feature>
<feature type="transmembrane region" description="Helical" evidence="1">
    <location>
        <begin position="306"/>
        <end position="326"/>
    </location>
</feature>
<feature type="transmembrane region" description="Helical" evidence="1">
    <location>
        <begin position="390"/>
        <end position="410"/>
    </location>
</feature>
<feature type="transmembrane region" description="Helical" evidence="1">
    <location>
        <begin position="412"/>
        <end position="432"/>
    </location>
</feature>
<feature type="transmembrane region" description="Helical" evidence="1">
    <location>
        <begin position="442"/>
        <end position="462"/>
    </location>
</feature>
<feature type="transmembrane region" description="Helical" evidence="1">
    <location>
        <begin position="481"/>
        <end position="501"/>
    </location>
</feature>
<feature type="region of interest" description="Disordered" evidence="2">
    <location>
        <begin position="1"/>
        <end position="30"/>
    </location>
</feature>
<feature type="sequence conflict" description="In Ref. 1; AAO13361." evidence="4" ref="1">
    <original>NII</original>
    <variation>TSL</variation>
    <location>
        <begin position="166"/>
        <end position="168"/>
    </location>
</feature>